<comment type="function">
    <text evidence="2">N-alpha-acetyltransferase that specifically mediates the acetylation of the acidic amino terminus of processed forms of beta- and gamma-actin (ACTB and ACTG, respectively). N-terminal acetylation of processed beta- and gamma-actin regulates actin filament depolymerization and elongation. In vivo, preferentially displays N-terminal acetyltransferase activity towards acid N-terminal sequences starting with Asp-Asp-Asp and Glu-Glu-Glu. In vitro, shows high activity towards Met-Asp-Glu-Leu and Met-Asp-Asp-Asp. May act as a tumor suppressor.</text>
</comment>
<comment type="catalytic activity">
    <reaction evidence="2">
        <text>N-terminal L-aspartyl-L-aspartyl-L-aspartyl-[protein] + acetyl-CoA = N-terminal N-acetyl-L-aspartyl-L-aspartyl-L-aspartyl-[protein] + CoA + H(+)</text>
        <dbReference type="Rhea" id="RHEA:57328"/>
        <dbReference type="Rhea" id="RHEA-COMP:14863"/>
        <dbReference type="Rhea" id="RHEA-COMP:14864"/>
        <dbReference type="ChEBI" id="CHEBI:15378"/>
        <dbReference type="ChEBI" id="CHEBI:57287"/>
        <dbReference type="ChEBI" id="CHEBI:57288"/>
        <dbReference type="ChEBI" id="CHEBI:141602"/>
        <dbReference type="ChEBI" id="CHEBI:141604"/>
    </reaction>
</comment>
<comment type="catalytic activity">
    <reaction evidence="2">
        <text>N-terminal L-glutamyl-L-glutamyl-L-glutamyl-[protein] + acetyl-CoA = N-terminal N-acetyl-L-glutamyl-L-glutamyl-L-glutamyl-[protein] + CoA + H(+)</text>
        <dbReference type="Rhea" id="RHEA:57324"/>
        <dbReference type="Rhea" id="RHEA-COMP:14865"/>
        <dbReference type="Rhea" id="RHEA-COMP:14866"/>
        <dbReference type="ChEBI" id="CHEBI:15378"/>
        <dbReference type="ChEBI" id="CHEBI:57287"/>
        <dbReference type="ChEBI" id="CHEBI:57288"/>
        <dbReference type="ChEBI" id="CHEBI:141603"/>
        <dbReference type="ChEBI" id="CHEBI:141606"/>
    </reaction>
</comment>
<comment type="subcellular location">
    <subcellularLocation>
        <location evidence="2">Cytoplasm</location>
        <location evidence="2">Cytosol</location>
    </subcellularLocation>
</comment>
<comment type="similarity">
    <text evidence="6">Belongs to the acetyltransferase family.</text>
</comment>
<dbReference type="EC" id="2.3.1.-" evidence="2"/>
<dbReference type="EMBL" id="AF172275">
    <property type="protein sequence ID" value="AAD48062.1"/>
    <property type="molecule type" value="mRNA"/>
</dbReference>
<dbReference type="EMBL" id="AF338323">
    <property type="protein sequence ID" value="AAL57174.1"/>
    <property type="molecule type" value="Genomic_DNA"/>
</dbReference>
<dbReference type="EMBL" id="BC026545">
    <property type="protein sequence ID" value="AAH26545.1"/>
    <property type="molecule type" value="mRNA"/>
</dbReference>
<dbReference type="EMBL" id="AH009891">
    <property type="protein sequence ID" value="AAG23428.1"/>
    <property type="molecule type" value="Genomic_DNA"/>
</dbReference>
<dbReference type="EMBL" id="AF417492">
    <property type="protein sequence ID" value="AAM14421.1"/>
    <property type="molecule type" value="mRNA"/>
</dbReference>
<dbReference type="EMBL" id="AF417493">
    <property type="protein sequence ID" value="AAM14423.1"/>
    <property type="molecule type" value="mRNA"/>
</dbReference>
<dbReference type="EMBL" id="AF417494">
    <property type="protein sequence ID" value="AAM14425.1"/>
    <property type="molecule type" value="mRNA"/>
</dbReference>
<dbReference type="EMBL" id="AF417495">
    <property type="protein sequence ID" value="AAM14427.1"/>
    <property type="molecule type" value="mRNA"/>
</dbReference>
<dbReference type="EMBL" id="AF417497">
    <property type="protein sequence ID" value="AAM14431.1"/>
    <property type="molecule type" value="mRNA"/>
</dbReference>
<dbReference type="EMBL" id="AF417498">
    <property type="protein sequence ID" value="AAM14433.1"/>
    <property type="molecule type" value="mRNA"/>
</dbReference>
<dbReference type="CCDS" id="CCDS23498.1"/>
<dbReference type="RefSeq" id="NP_062724.1">
    <property type="nucleotide sequence ID" value="NM_019750.4"/>
</dbReference>
<dbReference type="SMR" id="Q9R123"/>
<dbReference type="FunCoup" id="Q9R123">
    <property type="interactions" value="465"/>
</dbReference>
<dbReference type="STRING" id="10090.ENSMUSP00000091300"/>
<dbReference type="GlyGen" id="Q9R123">
    <property type="glycosylation" value="1 site"/>
</dbReference>
<dbReference type="iPTMnet" id="Q9R123"/>
<dbReference type="PhosphoSitePlus" id="Q9R123"/>
<dbReference type="SwissPalm" id="Q9R123"/>
<dbReference type="PaxDb" id="10090-ENSMUSP00000091300"/>
<dbReference type="ProteomicsDB" id="252645"/>
<dbReference type="Antibodypedia" id="34876">
    <property type="antibodies" value="188 antibodies from 22 providers"/>
</dbReference>
<dbReference type="DNASU" id="56441"/>
<dbReference type="Ensembl" id="ENSMUST00000093785.6">
    <property type="protein sequence ID" value="ENSMUSP00000091300.5"/>
    <property type="gene ID" value="ENSMUSG00000079334.9"/>
</dbReference>
<dbReference type="GeneID" id="56441"/>
<dbReference type="KEGG" id="mmu:56441"/>
<dbReference type="UCSC" id="uc009rly.1">
    <property type="organism name" value="mouse"/>
</dbReference>
<dbReference type="AGR" id="MGI:1888902"/>
<dbReference type="CTD" id="24142"/>
<dbReference type="MGI" id="MGI:1888902">
    <property type="gene designation" value="Naa80"/>
</dbReference>
<dbReference type="VEuPathDB" id="HostDB:ENSMUSG00000079334"/>
<dbReference type="eggNOG" id="KOG3397">
    <property type="taxonomic scope" value="Eukaryota"/>
</dbReference>
<dbReference type="GeneTree" id="ENSGT00390000000980"/>
<dbReference type="HOGENOM" id="CLU_077855_0_0_1"/>
<dbReference type="InParanoid" id="Q9R123"/>
<dbReference type="OMA" id="IYWMHKD"/>
<dbReference type="PhylomeDB" id="Q9R123"/>
<dbReference type="TreeFam" id="TF106312"/>
<dbReference type="BioGRID-ORCS" id="56441">
    <property type="hits" value="5 hits in 80 CRISPR screens"/>
</dbReference>
<dbReference type="ChiTaRS" id="Naa80">
    <property type="organism name" value="mouse"/>
</dbReference>
<dbReference type="PRO" id="PR:Q9R123"/>
<dbReference type="Proteomes" id="UP000000589">
    <property type="component" value="Chromosome 9"/>
</dbReference>
<dbReference type="RNAct" id="Q9R123">
    <property type="molecule type" value="protein"/>
</dbReference>
<dbReference type="Bgee" id="ENSMUSG00000079334">
    <property type="expression patterns" value="Expressed in left lobe of liver and 223 other cell types or tissues"/>
</dbReference>
<dbReference type="ExpressionAtlas" id="Q9R123">
    <property type="expression patterns" value="baseline and differential"/>
</dbReference>
<dbReference type="GO" id="GO:0005829">
    <property type="term" value="C:cytosol"/>
    <property type="evidence" value="ECO:0000250"/>
    <property type="project" value="UniProtKB"/>
</dbReference>
<dbReference type="GO" id="GO:1905502">
    <property type="term" value="F:acetyl-CoA binding"/>
    <property type="evidence" value="ECO:0007669"/>
    <property type="project" value="Ensembl"/>
</dbReference>
<dbReference type="GO" id="GO:0004596">
    <property type="term" value="F:protein-N-terminal amino-acid acetyltransferase activity"/>
    <property type="evidence" value="ECO:0000250"/>
    <property type="project" value="UniProtKB"/>
</dbReference>
<dbReference type="GO" id="GO:0030047">
    <property type="term" value="P:actin modification"/>
    <property type="evidence" value="ECO:0000250"/>
    <property type="project" value="UniProtKB"/>
</dbReference>
<dbReference type="GO" id="GO:0017190">
    <property type="term" value="P:N-terminal peptidyl-aspartic acid acetylation"/>
    <property type="evidence" value="ECO:0000250"/>
    <property type="project" value="UniProtKB"/>
</dbReference>
<dbReference type="GO" id="GO:0018002">
    <property type="term" value="P:N-terminal peptidyl-glutamic acid acetylation"/>
    <property type="evidence" value="ECO:0000250"/>
    <property type="project" value="UniProtKB"/>
</dbReference>
<dbReference type="GO" id="GO:0008064">
    <property type="term" value="P:regulation of actin polymerization or depolymerization"/>
    <property type="evidence" value="ECO:0000250"/>
    <property type="project" value="UniProtKB"/>
</dbReference>
<dbReference type="CDD" id="cd04301">
    <property type="entry name" value="NAT_SF"/>
    <property type="match status" value="1"/>
</dbReference>
<dbReference type="FunFam" id="3.40.630.30:FF:000061">
    <property type="entry name" value="N(alpha)-acetyltransferase 80, NatH catalytic subunit"/>
    <property type="match status" value="1"/>
</dbReference>
<dbReference type="Gene3D" id="3.40.630.30">
    <property type="match status" value="1"/>
</dbReference>
<dbReference type="InterPro" id="IPR016181">
    <property type="entry name" value="Acyl_CoA_acyltransferase"/>
</dbReference>
<dbReference type="InterPro" id="IPR000182">
    <property type="entry name" value="GNAT_dom"/>
</dbReference>
<dbReference type="InterPro" id="IPR039840">
    <property type="entry name" value="NAA80"/>
</dbReference>
<dbReference type="PANTHER" id="PTHR13538">
    <property type="entry name" value="N-ACETYLTRANSFERASE 6"/>
    <property type="match status" value="1"/>
</dbReference>
<dbReference type="PANTHER" id="PTHR13538:SF4">
    <property type="entry name" value="N-ALPHA-ACETYLTRANSFERASE 80"/>
    <property type="match status" value="1"/>
</dbReference>
<dbReference type="Pfam" id="PF00583">
    <property type="entry name" value="Acetyltransf_1"/>
    <property type="match status" value="1"/>
</dbReference>
<dbReference type="SUPFAM" id="SSF55729">
    <property type="entry name" value="Acyl-CoA N-acyltransferases (Nat)"/>
    <property type="match status" value="1"/>
</dbReference>
<dbReference type="PROSITE" id="PS51186">
    <property type="entry name" value="GNAT"/>
    <property type="match status" value="1"/>
</dbReference>
<name>NAA80_MOUSE</name>
<keyword id="KW-0012">Acyltransferase</keyword>
<keyword id="KW-0963">Cytoplasm</keyword>
<keyword id="KW-1185">Reference proteome</keyword>
<keyword id="KW-0808">Transferase</keyword>
<keyword id="KW-0043">Tumor suppressor</keyword>
<evidence type="ECO:0000250" key="1">
    <source>
        <dbReference type="UniProtKB" id="Q59DX8"/>
    </source>
</evidence>
<evidence type="ECO:0000250" key="2">
    <source>
        <dbReference type="UniProtKB" id="Q93015"/>
    </source>
</evidence>
<evidence type="ECO:0000255" key="3">
    <source>
        <dbReference type="PROSITE-ProRule" id="PRU00532"/>
    </source>
</evidence>
<evidence type="ECO:0000256" key="4">
    <source>
        <dbReference type="SAM" id="MobiDB-lite"/>
    </source>
</evidence>
<evidence type="ECO:0000303" key="5">
    <source ref="1"/>
</evidence>
<evidence type="ECO:0000305" key="6"/>
<evidence type="ECO:0000312" key="7">
    <source>
        <dbReference type="MGI" id="MGI:1888902"/>
    </source>
</evidence>
<sequence>MELILSTSPAKLTLDPARQPELTLRFNLSKLTLDPARQPELSLSPRLAELTLDPTCHPEMSLSPGPAELTLDPQHQAKELPVPKLPELILEPVHCRPELMSACADLINDQWPRSRASRLHSLGQSSDAFPLCLMLLSPQPTPGAAPVVVGHARLSRVLDQPHSLLVETVVVARPLRGRGFGRRLMEGLEAFARARGFRRLHLTTHDQLYFYAHLGYQLGEPVQGLAFTNRRLSTTVLRAFSKPPCPQPPCKEPILAAQAVPRSSKGPPLPPPPPLPQSLTASPPPSPEPLPQSPLETCYRDLKGCPIFWMEKDI</sequence>
<proteinExistence type="evidence at transcript level"/>
<organism>
    <name type="scientific">Mus musculus</name>
    <name type="common">Mouse</name>
    <dbReference type="NCBI Taxonomy" id="10090"/>
    <lineage>
        <taxon>Eukaryota</taxon>
        <taxon>Metazoa</taxon>
        <taxon>Chordata</taxon>
        <taxon>Craniata</taxon>
        <taxon>Vertebrata</taxon>
        <taxon>Euteleostomi</taxon>
        <taxon>Mammalia</taxon>
        <taxon>Eutheria</taxon>
        <taxon>Euarchontoglires</taxon>
        <taxon>Glires</taxon>
        <taxon>Rodentia</taxon>
        <taxon>Myomorpha</taxon>
        <taxon>Muroidea</taxon>
        <taxon>Muridae</taxon>
        <taxon>Murinae</taxon>
        <taxon>Mus</taxon>
        <taxon>Mus</taxon>
    </lineage>
</organism>
<protein>
    <recommendedName>
        <fullName evidence="2">N-alpha-acetyltransferase 80</fullName>
        <ecNumber evidence="2">2.3.1.-</ecNumber>
    </recommendedName>
    <alternativeName>
        <fullName evidence="6">N-acetyltransferase 6</fullName>
    </alternativeName>
    <alternativeName>
        <fullName evidence="5">Protein fusion-2 homolog</fullName>
        <shortName evidence="5">Protein fus-2</shortName>
    </alternativeName>
</protein>
<reference key="1">
    <citation type="submission" date="1999-07" db="EMBL/GenBank/DDBJ databases">
        <title>The mouse ortholog of the human Fus2 gene.</title>
        <authorList>
            <person name="Duh F.-M."/>
            <person name="Minna J.D."/>
            <person name="Lerman M.I."/>
        </authorList>
    </citation>
    <scope>NUCLEOTIDE SEQUENCE [MRNA]</scope>
</reference>
<reference key="2">
    <citation type="submission" date="2001-01" db="EMBL/GenBank/DDBJ databases">
        <title>Genomic sequence of the mouse Hyal1 locus encoding the mouse Hyal1, Fus2, and Hyal3 genes.</title>
        <authorList>
            <person name="Csoka A.B."/>
        </authorList>
    </citation>
    <scope>NUCLEOTIDE SEQUENCE [GENOMIC DNA]</scope>
</reference>
<reference key="3">
    <citation type="journal article" date="2004" name="Genome Res.">
        <title>The status, quality, and expansion of the NIH full-length cDNA project: the Mammalian Gene Collection (MGC).</title>
        <authorList>
            <consortium name="The MGC Project Team"/>
        </authorList>
    </citation>
    <scope>NUCLEOTIDE SEQUENCE [LARGE SCALE MRNA]</scope>
    <source>
        <tissue>Liver</tissue>
    </source>
</reference>
<reference key="4">
    <citation type="submission" date="2000-08" db="EMBL/GenBank/DDBJ databases">
        <title>Isolation and characterization of the murine Hyal1 gene, encoding hyaluronidase 1.</title>
        <authorList>
            <person name="Shuttleworth T.L."/>
            <person name="Triggs-Raine B.L."/>
            <person name="Wicklow B.A."/>
        </authorList>
    </citation>
    <scope>NUCLEOTIDE SEQUENCE [GENOMIC DNA] OF 1-231</scope>
    <source>
        <strain>129/Sv</strain>
    </source>
</reference>
<reference key="5">
    <citation type="journal article" date="2002" name="J. Biol. Chem.">
        <title>Characterization of the murine hyaluronidase gene region reveals complex organization and cotranscription of Hyal1 with downstream genes, Fus2 and Hyal3.</title>
        <authorList>
            <person name="Shuttleworth T.L."/>
            <person name="Wilson M.D."/>
            <person name="Wicklow B.A."/>
            <person name="Wilkins J.A."/>
            <person name="Triggs-Raine B.L."/>
        </authorList>
    </citation>
    <scope>NUCLEOTIDE SEQUENCE [MRNA] OF 1-204</scope>
    <source>
        <strain>129/Sv</strain>
    </source>
</reference>
<feature type="chain" id="PRO_0000074537" description="N-alpha-acetyltransferase 80">
    <location>
        <begin position="1"/>
        <end position="314"/>
    </location>
</feature>
<feature type="domain" description="N-acetyltransferase" evidence="3">
    <location>
        <begin position="90"/>
        <end position="243"/>
    </location>
</feature>
<feature type="region of interest" description="Disordered" evidence="4">
    <location>
        <begin position="260"/>
        <end position="295"/>
    </location>
</feature>
<feature type="compositionally biased region" description="Pro residues" evidence="4">
    <location>
        <begin position="267"/>
        <end position="292"/>
    </location>
</feature>
<feature type="binding site" evidence="1">
    <location>
        <position position="113"/>
    </location>
    <ligand>
        <name>substrate</name>
    </ligand>
</feature>
<feature type="binding site" evidence="1">
    <location>
        <begin position="118"/>
        <end position="121"/>
    </location>
    <ligand>
        <name>substrate</name>
    </ligand>
</feature>
<feature type="binding site" evidence="1">
    <location>
        <begin position="169"/>
        <end position="171"/>
    </location>
    <ligand>
        <name>acetyl-CoA</name>
        <dbReference type="ChEBI" id="CHEBI:57288"/>
    </ligand>
</feature>
<feature type="binding site" evidence="1">
    <location>
        <begin position="177"/>
        <end position="182"/>
    </location>
    <ligand>
        <name>acetyl-CoA</name>
        <dbReference type="ChEBI" id="CHEBI:57288"/>
    </ligand>
</feature>
<feature type="binding site" evidence="1">
    <location>
        <position position="207"/>
    </location>
    <ligand>
        <name>acetyl-CoA</name>
        <dbReference type="ChEBI" id="CHEBI:57288"/>
    </ligand>
</feature>
<gene>
    <name evidence="2" type="primary">Naa80</name>
    <name type="synonym">Fus2</name>
    <name evidence="7" type="synonym">Nat6</name>
</gene>
<accession>Q9R123</accession>
<accession>Q8QZY5</accession>
<accession>Q8R014</accession>
<accession>Q9ERM0</accession>